<organism>
    <name type="scientific">Carica papaya</name>
    <name type="common">Papaya</name>
    <dbReference type="NCBI Taxonomy" id="3649"/>
    <lineage>
        <taxon>Eukaryota</taxon>
        <taxon>Viridiplantae</taxon>
        <taxon>Streptophyta</taxon>
        <taxon>Embryophyta</taxon>
        <taxon>Tracheophyta</taxon>
        <taxon>Spermatophyta</taxon>
        <taxon>Magnoliopsida</taxon>
        <taxon>eudicotyledons</taxon>
        <taxon>Gunneridae</taxon>
        <taxon>Pentapetalae</taxon>
        <taxon>rosids</taxon>
        <taxon>malvids</taxon>
        <taxon>Brassicales</taxon>
        <taxon>Caricaceae</taxon>
        <taxon>Carica</taxon>
    </lineage>
</organism>
<dbReference type="PIR" id="S74136">
    <property type="entry name" value="S74136"/>
</dbReference>
<dbReference type="PDB" id="3S8J">
    <property type="method" value="X-ray"/>
    <property type="resolution" value="2.60 A"/>
    <property type="chains" value="A/B=1-184"/>
</dbReference>
<dbReference type="PDB" id="3S8K">
    <property type="method" value="X-ray"/>
    <property type="resolution" value="1.70 A"/>
    <property type="chains" value="A/B=1-184"/>
</dbReference>
<dbReference type="PDBsum" id="3S8J"/>
<dbReference type="PDBsum" id="3S8K"/>
<dbReference type="SMR" id="P80691"/>
<dbReference type="MEROPS" id="I03.022"/>
<dbReference type="EvolutionaryTrace" id="P80691"/>
<dbReference type="GO" id="GO:0005576">
    <property type="term" value="C:extracellular region"/>
    <property type="evidence" value="ECO:0007669"/>
    <property type="project" value="UniProtKB-SubCell"/>
</dbReference>
<dbReference type="GO" id="GO:0004867">
    <property type="term" value="F:serine-type endopeptidase inhibitor activity"/>
    <property type="evidence" value="ECO:0007669"/>
    <property type="project" value="UniProtKB-KW"/>
</dbReference>
<dbReference type="CDD" id="cd23371">
    <property type="entry name" value="beta-trefoil_STI_LSPI"/>
    <property type="match status" value="1"/>
</dbReference>
<dbReference type="Gene3D" id="2.80.10.50">
    <property type="match status" value="1"/>
</dbReference>
<dbReference type="InterPro" id="IPR011065">
    <property type="entry name" value="Kunitz_inhibitor_STI-like_sf"/>
</dbReference>
<dbReference type="InterPro" id="IPR002160">
    <property type="entry name" value="Prot_inh_Kunz-lg"/>
</dbReference>
<dbReference type="PANTHER" id="PTHR33107:SF28">
    <property type="entry name" value="CYSTEINE PROTEASE INHIBITOR 8-LIKE"/>
    <property type="match status" value="1"/>
</dbReference>
<dbReference type="PANTHER" id="PTHR33107">
    <property type="entry name" value="KUNITZ TRYPSIN INHIBITOR 2"/>
    <property type="match status" value="1"/>
</dbReference>
<dbReference type="Pfam" id="PF00197">
    <property type="entry name" value="Kunitz_legume"/>
    <property type="match status" value="1"/>
</dbReference>
<dbReference type="PRINTS" id="PR00291">
    <property type="entry name" value="KUNITZINHBTR"/>
</dbReference>
<dbReference type="SMART" id="SM00452">
    <property type="entry name" value="STI"/>
    <property type="match status" value="1"/>
</dbReference>
<dbReference type="SUPFAM" id="SSF50386">
    <property type="entry name" value="STI-like"/>
    <property type="match status" value="1"/>
</dbReference>
<dbReference type="PROSITE" id="PS00283">
    <property type="entry name" value="SOYBEAN_KUNITZ"/>
    <property type="match status" value="1"/>
</dbReference>
<evidence type="ECO:0000305" key="1"/>
<evidence type="ECO:0007829" key="2">
    <source>
        <dbReference type="PDB" id="3S8J"/>
    </source>
</evidence>
<evidence type="ECO:0007829" key="3">
    <source>
        <dbReference type="PDB" id="3S8K"/>
    </source>
</evidence>
<proteinExistence type="evidence at protein level"/>
<name>LSPI_CARPA</name>
<reference key="1">
    <citation type="journal article" date="1996" name="Eur. J. Biochem.">
        <title>The primary structure and characterization of carbohydrate chains of the extracellular glycoprotein proteinase inhibitor from latex of Carica papaya.</title>
        <authorList>
            <person name="Odani S."/>
            <person name="Yokokawa Y."/>
            <person name="Takeda H."/>
            <person name="Abe S."/>
            <person name="Odani S."/>
        </authorList>
    </citation>
    <scope>PROTEIN SEQUENCE</scope>
    <source>
        <tissue>Latex</tissue>
    </source>
</reference>
<accession>P80691</accession>
<feature type="chain" id="PRO_0000083323" description="Latex serine proteinase inhibitor">
    <location>
        <begin position="1"/>
        <end position="184"/>
    </location>
</feature>
<feature type="glycosylation site" description="N-linked (GlcNAc...) asparagine">
    <location>
        <position position="84"/>
    </location>
</feature>
<feature type="glycosylation site" description="N-linked (GlcNAc...) asparagine">
    <location>
        <position position="90"/>
    </location>
</feature>
<feature type="disulfide bond">
    <location>
        <begin position="45"/>
        <end position="89"/>
    </location>
</feature>
<feature type="disulfide bond">
    <location>
        <begin position="142"/>
        <end position="153"/>
    </location>
</feature>
<feature type="strand" evidence="3">
    <location>
        <begin position="20"/>
        <end position="26"/>
    </location>
</feature>
<feature type="helix" evidence="3">
    <location>
        <begin position="28"/>
        <end position="30"/>
    </location>
</feature>
<feature type="strand" evidence="3">
    <location>
        <begin position="33"/>
        <end position="37"/>
    </location>
</feature>
<feature type="strand" evidence="3">
    <location>
        <begin position="40"/>
        <end position="42"/>
    </location>
</feature>
<feature type="strand" evidence="3">
    <location>
        <begin position="48"/>
        <end position="52"/>
    </location>
</feature>
<feature type="strand" evidence="2">
    <location>
        <begin position="53"/>
        <end position="55"/>
    </location>
</feature>
<feature type="strand" evidence="3">
    <location>
        <begin position="60"/>
        <end position="66"/>
    </location>
</feature>
<feature type="strand" evidence="3">
    <location>
        <begin position="79"/>
        <end position="85"/>
    </location>
</feature>
<feature type="strand" evidence="3">
    <location>
        <begin position="88"/>
        <end position="91"/>
    </location>
</feature>
<feature type="strand" evidence="3">
    <location>
        <begin position="96"/>
        <end position="100"/>
    </location>
</feature>
<feature type="strand" evidence="3">
    <location>
        <begin position="103"/>
        <end position="110"/>
    </location>
</feature>
<feature type="strand" evidence="3">
    <location>
        <begin position="115"/>
        <end position="118"/>
    </location>
</feature>
<feature type="helix" evidence="3">
    <location>
        <begin position="119"/>
        <end position="124"/>
    </location>
</feature>
<feature type="strand" evidence="3">
    <location>
        <begin position="126"/>
        <end position="130"/>
    </location>
</feature>
<feature type="strand" evidence="3">
    <location>
        <begin position="137"/>
        <end position="141"/>
    </location>
</feature>
<feature type="strand" evidence="3">
    <location>
        <begin position="149"/>
        <end position="151"/>
    </location>
</feature>
<feature type="strand" evidence="3">
    <location>
        <begin position="154"/>
        <end position="160"/>
    </location>
</feature>
<feature type="strand" evidence="3">
    <location>
        <begin position="166"/>
        <end position="173"/>
    </location>
</feature>
<feature type="strand" evidence="3">
    <location>
        <begin position="177"/>
        <end position="182"/>
    </location>
</feature>
<protein>
    <recommendedName>
        <fullName>Latex serine proteinase inhibitor</fullName>
    </recommendedName>
</protein>
<comment type="subcellular location">
    <subcellularLocation>
        <location>Secreted</location>
        <location>Extracellular space</location>
    </subcellularLocation>
</comment>
<comment type="similarity">
    <text evidence="1">Belongs to the protease inhibitor I3 (leguminous Kunitz-type inhibitor) family.</text>
</comment>
<keyword id="KW-0002">3D-structure</keyword>
<keyword id="KW-0903">Direct protein sequencing</keyword>
<keyword id="KW-1015">Disulfide bond</keyword>
<keyword id="KW-0325">Glycoprotein</keyword>
<keyword id="KW-0646">Protease inhibitor</keyword>
<keyword id="KW-0964">Secreted</keyword>
<keyword id="KW-0722">Serine protease inhibitor</keyword>
<sequence>VAPKPIVDIDGKPVLYGVDYFVVSAIWGAGGGGLTVYGPGNKKKCPLSVVQDPFDNGEPIIFSAIKNVKDNIVFESVDLNVKFNITINCNETTAWKVDRFPGVIGWTVTLGGEKGYHGFESTHSMFKIKKAGLPFSYKFHFCPSYPRTRLIPCNNVDIFFDKYRIRRLILTNDAKEFVFIKTNR</sequence>